<accession>A8ET36</accession>
<evidence type="ECO:0000255" key="1">
    <source>
        <dbReference type="HAMAP-Rule" id="MF_00134"/>
    </source>
</evidence>
<proteinExistence type="inferred from homology"/>
<protein>
    <recommendedName>
        <fullName evidence="1">Indole-3-glycerol phosphate synthase</fullName>
        <shortName evidence="1">IGPS</shortName>
        <ecNumber evidence="1">4.1.1.48</ecNumber>
    </recommendedName>
</protein>
<name>TRPC_ALIB4</name>
<sequence length="263" mass="29886">MILDEIIEKTKEDLILRKEKLNFEELEKKLKTINSKPKDVKTFLKSTKEEPIRIIAEVKKASPSKGIIKEDFNPLEIALEYSQNGANAISVLTEPHYFKGNLEYLSTIKNSVSTPLLRKDFIVDKYQIAEALLYGADFILLIAKALNEKELKELYEYARSLDLEVLVEIHDNEDLTKALNSNATIIGINHRNLGTFEMDMALCDKLIPLIPKDKIIVAESGVSDTEVIKRLHNVGADAFLIGEHFMRVPSIKDELTKFKNTLN</sequence>
<feature type="chain" id="PRO_1000057870" description="Indole-3-glycerol phosphate synthase">
    <location>
        <begin position="1"/>
        <end position="263"/>
    </location>
</feature>
<keyword id="KW-0028">Amino-acid biosynthesis</keyword>
<keyword id="KW-0057">Aromatic amino acid biosynthesis</keyword>
<keyword id="KW-0210">Decarboxylase</keyword>
<keyword id="KW-0456">Lyase</keyword>
<keyword id="KW-1185">Reference proteome</keyword>
<keyword id="KW-0822">Tryptophan biosynthesis</keyword>
<comment type="catalytic activity">
    <reaction evidence="1">
        <text>1-(2-carboxyphenylamino)-1-deoxy-D-ribulose 5-phosphate + H(+) = (1S,2R)-1-C-(indol-3-yl)glycerol 3-phosphate + CO2 + H2O</text>
        <dbReference type="Rhea" id="RHEA:23476"/>
        <dbReference type="ChEBI" id="CHEBI:15377"/>
        <dbReference type="ChEBI" id="CHEBI:15378"/>
        <dbReference type="ChEBI" id="CHEBI:16526"/>
        <dbReference type="ChEBI" id="CHEBI:58613"/>
        <dbReference type="ChEBI" id="CHEBI:58866"/>
        <dbReference type="EC" id="4.1.1.48"/>
    </reaction>
</comment>
<comment type="pathway">
    <text evidence="1">Amino-acid biosynthesis; L-tryptophan biosynthesis; L-tryptophan from chorismate: step 4/5.</text>
</comment>
<comment type="similarity">
    <text evidence="1">Belongs to the TrpC family.</text>
</comment>
<reference key="1">
    <citation type="journal article" date="2007" name="PLoS ONE">
        <title>The complete genome sequence and analysis of the Epsilonproteobacterium Arcobacter butzleri.</title>
        <authorList>
            <person name="Miller W.G."/>
            <person name="Parker C.T."/>
            <person name="Rubenfield M."/>
            <person name="Mendz G.L."/>
            <person name="Woesten M.M.S.M."/>
            <person name="Ussery D.W."/>
            <person name="Stolz J.F."/>
            <person name="Binnewies T.T."/>
            <person name="Hallin P.F."/>
            <person name="Wang G."/>
            <person name="Malek J.A."/>
            <person name="Rogosin A."/>
            <person name="Stanker L.H."/>
            <person name="Mandrell R.E."/>
        </authorList>
    </citation>
    <scope>NUCLEOTIDE SEQUENCE [LARGE SCALE GENOMIC DNA]</scope>
    <source>
        <strain>RM4018</strain>
    </source>
</reference>
<dbReference type="EC" id="4.1.1.48" evidence="1"/>
<dbReference type="EMBL" id="CP000361">
    <property type="protein sequence ID" value="ABV67110.1"/>
    <property type="molecule type" value="Genomic_DNA"/>
</dbReference>
<dbReference type="RefSeq" id="WP_012012583.1">
    <property type="nucleotide sequence ID" value="NC_009850.1"/>
</dbReference>
<dbReference type="SMR" id="A8ET36"/>
<dbReference type="STRING" id="367737.Abu_0850"/>
<dbReference type="GeneID" id="24305062"/>
<dbReference type="KEGG" id="abu:Abu_0850"/>
<dbReference type="eggNOG" id="COG0134">
    <property type="taxonomic scope" value="Bacteria"/>
</dbReference>
<dbReference type="HOGENOM" id="CLU_034247_2_0_7"/>
<dbReference type="UniPathway" id="UPA00035">
    <property type="reaction ID" value="UER00043"/>
</dbReference>
<dbReference type="Proteomes" id="UP000001136">
    <property type="component" value="Chromosome"/>
</dbReference>
<dbReference type="GO" id="GO:0004425">
    <property type="term" value="F:indole-3-glycerol-phosphate synthase activity"/>
    <property type="evidence" value="ECO:0007669"/>
    <property type="project" value="UniProtKB-UniRule"/>
</dbReference>
<dbReference type="GO" id="GO:0004640">
    <property type="term" value="F:phosphoribosylanthranilate isomerase activity"/>
    <property type="evidence" value="ECO:0007669"/>
    <property type="project" value="TreeGrafter"/>
</dbReference>
<dbReference type="GO" id="GO:0000162">
    <property type="term" value="P:L-tryptophan biosynthetic process"/>
    <property type="evidence" value="ECO:0007669"/>
    <property type="project" value="UniProtKB-UniRule"/>
</dbReference>
<dbReference type="CDD" id="cd00331">
    <property type="entry name" value="IGPS"/>
    <property type="match status" value="1"/>
</dbReference>
<dbReference type="FunFam" id="3.20.20.70:FF:000024">
    <property type="entry name" value="Indole-3-glycerol phosphate synthase"/>
    <property type="match status" value="1"/>
</dbReference>
<dbReference type="Gene3D" id="3.20.20.70">
    <property type="entry name" value="Aldolase class I"/>
    <property type="match status" value="1"/>
</dbReference>
<dbReference type="HAMAP" id="MF_00134_A">
    <property type="entry name" value="IGPS_A"/>
    <property type="match status" value="1"/>
</dbReference>
<dbReference type="HAMAP" id="MF_00134_B">
    <property type="entry name" value="IGPS_B"/>
    <property type="match status" value="1"/>
</dbReference>
<dbReference type="InterPro" id="IPR013785">
    <property type="entry name" value="Aldolase_TIM"/>
</dbReference>
<dbReference type="InterPro" id="IPR045186">
    <property type="entry name" value="Indole-3-glycerol_P_synth"/>
</dbReference>
<dbReference type="InterPro" id="IPR013798">
    <property type="entry name" value="Indole-3-glycerol_P_synth_dom"/>
</dbReference>
<dbReference type="InterPro" id="IPR001468">
    <property type="entry name" value="Indole-3-GlycerolPSynthase_CS"/>
</dbReference>
<dbReference type="InterPro" id="IPR011060">
    <property type="entry name" value="RibuloseP-bd_barrel"/>
</dbReference>
<dbReference type="NCBIfam" id="NF001377">
    <property type="entry name" value="PRK00278.2-4"/>
    <property type="match status" value="1"/>
</dbReference>
<dbReference type="NCBIfam" id="NF001378">
    <property type="entry name" value="PRK00278.2-5"/>
    <property type="match status" value="1"/>
</dbReference>
<dbReference type="PANTHER" id="PTHR22854:SF2">
    <property type="entry name" value="INDOLE-3-GLYCEROL-PHOSPHATE SYNTHASE"/>
    <property type="match status" value="1"/>
</dbReference>
<dbReference type="PANTHER" id="PTHR22854">
    <property type="entry name" value="TRYPTOPHAN BIOSYNTHESIS PROTEIN"/>
    <property type="match status" value="1"/>
</dbReference>
<dbReference type="Pfam" id="PF00218">
    <property type="entry name" value="IGPS"/>
    <property type="match status" value="1"/>
</dbReference>
<dbReference type="SUPFAM" id="SSF51366">
    <property type="entry name" value="Ribulose-phoshate binding barrel"/>
    <property type="match status" value="1"/>
</dbReference>
<dbReference type="PROSITE" id="PS00614">
    <property type="entry name" value="IGPS"/>
    <property type="match status" value="1"/>
</dbReference>
<organism>
    <name type="scientific">Aliarcobacter butzleri (strain RM4018)</name>
    <name type="common">Arcobacter butzleri</name>
    <dbReference type="NCBI Taxonomy" id="367737"/>
    <lineage>
        <taxon>Bacteria</taxon>
        <taxon>Pseudomonadati</taxon>
        <taxon>Campylobacterota</taxon>
        <taxon>Epsilonproteobacteria</taxon>
        <taxon>Campylobacterales</taxon>
        <taxon>Arcobacteraceae</taxon>
        <taxon>Aliarcobacter</taxon>
    </lineage>
</organism>
<gene>
    <name evidence="1" type="primary">trpC</name>
    <name type="ordered locus">Abu_0850</name>
</gene>